<gene>
    <name evidence="1" type="primary">rnpA</name>
    <name type="ordered locus">LPC_3319</name>
</gene>
<keyword id="KW-0255">Endonuclease</keyword>
<keyword id="KW-0378">Hydrolase</keyword>
<keyword id="KW-0540">Nuclease</keyword>
<keyword id="KW-0694">RNA-binding</keyword>
<keyword id="KW-0819">tRNA processing</keyword>
<reference key="1">
    <citation type="submission" date="2006-11" db="EMBL/GenBank/DDBJ databases">
        <title>Identification and characterization of a new conjugation/ type IVA secretion system (trb/tra) of L. pneumophila Corby localized on a mobile genomic island.</title>
        <authorList>
            <person name="Gloeckner G."/>
            <person name="Albert-Weissenberger C."/>
            <person name="Weinmann E."/>
            <person name="Jacobi S."/>
            <person name="Schunder E."/>
            <person name="Steinert M."/>
            <person name="Buchrieser C."/>
            <person name="Hacker J."/>
            <person name="Heuner K."/>
        </authorList>
    </citation>
    <scope>NUCLEOTIDE SEQUENCE [LARGE SCALE GENOMIC DNA]</scope>
    <source>
        <strain>Corby</strain>
    </source>
</reference>
<sequence length="114" mass="13231">MFAFKKAQRLLKKNDFDFVFESAKKITTDDFIFLFRENKLGYARLGLALSKKMIAKAHDRNRIKRLLRESFRHTNLPAVDIIILARPGLAKKTNLGINTKLNKTWEKLASCYGK</sequence>
<name>RNPA_LEGPC</name>
<evidence type="ECO:0000255" key="1">
    <source>
        <dbReference type="HAMAP-Rule" id="MF_00227"/>
    </source>
</evidence>
<dbReference type="EC" id="3.1.26.5" evidence="1"/>
<dbReference type="EMBL" id="CP000675">
    <property type="protein sequence ID" value="ABQ57205.1"/>
    <property type="molecule type" value="Genomic_DNA"/>
</dbReference>
<dbReference type="RefSeq" id="WP_011947894.1">
    <property type="nucleotide sequence ID" value="NZ_JAPMSS010000003.1"/>
</dbReference>
<dbReference type="SMR" id="A5IIK5"/>
<dbReference type="GeneID" id="57037009"/>
<dbReference type="KEGG" id="lpc:LPC_3319"/>
<dbReference type="HOGENOM" id="CLU_117179_11_0_6"/>
<dbReference type="GO" id="GO:0030677">
    <property type="term" value="C:ribonuclease P complex"/>
    <property type="evidence" value="ECO:0007669"/>
    <property type="project" value="TreeGrafter"/>
</dbReference>
<dbReference type="GO" id="GO:0042781">
    <property type="term" value="F:3'-tRNA processing endoribonuclease activity"/>
    <property type="evidence" value="ECO:0007669"/>
    <property type="project" value="TreeGrafter"/>
</dbReference>
<dbReference type="GO" id="GO:0004526">
    <property type="term" value="F:ribonuclease P activity"/>
    <property type="evidence" value="ECO:0007669"/>
    <property type="project" value="UniProtKB-UniRule"/>
</dbReference>
<dbReference type="GO" id="GO:0000049">
    <property type="term" value="F:tRNA binding"/>
    <property type="evidence" value="ECO:0007669"/>
    <property type="project" value="UniProtKB-UniRule"/>
</dbReference>
<dbReference type="GO" id="GO:0001682">
    <property type="term" value="P:tRNA 5'-leader removal"/>
    <property type="evidence" value="ECO:0007669"/>
    <property type="project" value="UniProtKB-UniRule"/>
</dbReference>
<dbReference type="Gene3D" id="3.30.230.10">
    <property type="match status" value="1"/>
</dbReference>
<dbReference type="HAMAP" id="MF_00227">
    <property type="entry name" value="RNase_P"/>
    <property type="match status" value="1"/>
</dbReference>
<dbReference type="InterPro" id="IPR020568">
    <property type="entry name" value="Ribosomal_Su5_D2-typ_SF"/>
</dbReference>
<dbReference type="InterPro" id="IPR014721">
    <property type="entry name" value="Ribsml_uS5_D2-typ_fold_subgr"/>
</dbReference>
<dbReference type="InterPro" id="IPR000100">
    <property type="entry name" value="RNase_P"/>
</dbReference>
<dbReference type="InterPro" id="IPR020539">
    <property type="entry name" value="RNase_P_CS"/>
</dbReference>
<dbReference type="NCBIfam" id="TIGR00188">
    <property type="entry name" value="rnpA"/>
    <property type="match status" value="1"/>
</dbReference>
<dbReference type="PANTHER" id="PTHR33992">
    <property type="entry name" value="RIBONUCLEASE P PROTEIN COMPONENT"/>
    <property type="match status" value="1"/>
</dbReference>
<dbReference type="PANTHER" id="PTHR33992:SF1">
    <property type="entry name" value="RIBONUCLEASE P PROTEIN COMPONENT"/>
    <property type="match status" value="1"/>
</dbReference>
<dbReference type="Pfam" id="PF00825">
    <property type="entry name" value="Ribonuclease_P"/>
    <property type="match status" value="1"/>
</dbReference>
<dbReference type="SUPFAM" id="SSF54211">
    <property type="entry name" value="Ribosomal protein S5 domain 2-like"/>
    <property type="match status" value="1"/>
</dbReference>
<dbReference type="PROSITE" id="PS00648">
    <property type="entry name" value="RIBONUCLEASE_P"/>
    <property type="match status" value="1"/>
</dbReference>
<accession>A5IIK5</accession>
<organism>
    <name type="scientific">Legionella pneumophila (strain Corby)</name>
    <dbReference type="NCBI Taxonomy" id="400673"/>
    <lineage>
        <taxon>Bacteria</taxon>
        <taxon>Pseudomonadati</taxon>
        <taxon>Pseudomonadota</taxon>
        <taxon>Gammaproteobacteria</taxon>
        <taxon>Legionellales</taxon>
        <taxon>Legionellaceae</taxon>
        <taxon>Legionella</taxon>
    </lineage>
</organism>
<feature type="chain" id="PRO_1000021423" description="Ribonuclease P protein component">
    <location>
        <begin position="1"/>
        <end position="114"/>
    </location>
</feature>
<proteinExistence type="inferred from homology"/>
<protein>
    <recommendedName>
        <fullName evidence="1">Ribonuclease P protein component</fullName>
        <shortName evidence="1">RNase P protein</shortName>
        <shortName evidence="1">RNaseP protein</shortName>
        <ecNumber evidence="1">3.1.26.5</ecNumber>
    </recommendedName>
    <alternativeName>
        <fullName evidence="1">Protein C5</fullName>
    </alternativeName>
</protein>
<comment type="function">
    <text evidence="1">RNaseP catalyzes the removal of the 5'-leader sequence from pre-tRNA to produce the mature 5'-terminus. It can also cleave other RNA substrates such as 4.5S RNA. The protein component plays an auxiliary but essential role in vivo by binding to the 5'-leader sequence and broadening the substrate specificity of the ribozyme.</text>
</comment>
<comment type="catalytic activity">
    <reaction evidence="1">
        <text>Endonucleolytic cleavage of RNA, removing 5'-extranucleotides from tRNA precursor.</text>
        <dbReference type="EC" id="3.1.26.5"/>
    </reaction>
</comment>
<comment type="subunit">
    <text evidence="1">Consists of a catalytic RNA component (M1 or rnpB) and a protein subunit.</text>
</comment>
<comment type="similarity">
    <text evidence="1">Belongs to the RnpA family.</text>
</comment>